<protein>
    <recommendedName>
        <fullName>ATP synthase subunit 9, mitochondrial</fullName>
    </recommendedName>
    <alternativeName>
        <fullName>Lipid-binding protein</fullName>
    </alternativeName>
</protein>
<feature type="chain" id="PRO_0000112228" description="ATP synthase subunit 9, mitochondrial">
    <location>
        <begin position="1"/>
        <end position="88"/>
    </location>
</feature>
<feature type="transmembrane region" description="Helical" evidence="2">
    <location>
        <begin position="30"/>
        <end position="50"/>
    </location>
</feature>
<feature type="transmembrane region" description="Helical" evidence="2">
    <location>
        <begin position="66"/>
        <end position="86"/>
    </location>
</feature>
<feature type="site" description="Reversibly protonated during proton transport" evidence="1">
    <location>
        <position position="72"/>
    </location>
</feature>
<organism>
    <name type="scientific">Dictyostelium discoideum</name>
    <name type="common">Social amoeba</name>
    <dbReference type="NCBI Taxonomy" id="44689"/>
    <lineage>
        <taxon>Eukaryota</taxon>
        <taxon>Amoebozoa</taxon>
        <taxon>Evosea</taxon>
        <taxon>Eumycetozoa</taxon>
        <taxon>Dictyostelia</taxon>
        <taxon>Dictyosteliales</taxon>
        <taxon>Dictyosteliaceae</taxon>
        <taxon>Dictyostelium</taxon>
    </lineage>
</organism>
<geneLocation type="mitochondrion"/>
<proteinExistence type="inferred from homology"/>
<comment type="function">
    <text evidence="1">Mitochondrial membrane ATP synthase (F(1)F(0) ATP synthase or Complex V) produces ATP from ADP in the presence of a proton gradient across the membrane which is generated by electron transport complexes of the respiratory chain. F-type ATPases consist of two structural domains, F(1) - containing the extramembraneous catalytic core and F(0) - containing the membrane proton channel, linked together by a central stalk and a peripheral stalk. During catalysis, ATP synthesis in the catalytic domain of F(1) is coupled via a rotary mechanism of the central stalk subunits to proton translocation. Part of the complex F(0) domain. A homomeric c-ring of probably 10 subunits is part of the complex rotary element (By similarity).</text>
</comment>
<comment type="subunit">
    <text evidence="1">F-type ATPases have 2 components, CF(1) - the catalytic core - and CF(0) - the membrane proton channel. CF(1) has five subunits: alpha(3), beta(3), gamma(1), delta(1), epsilon(1). CF(0) has three main subunits: a, b and c (By similarity).</text>
</comment>
<comment type="subcellular location">
    <subcellularLocation>
        <location evidence="3">Mitochondrion membrane</location>
        <topology evidence="3">Multi-pass membrane protein</topology>
    </subcellularLocation>
</comment>
<comment type="similarity">
    <text evidence="3">Belongs to the ATPase C chain family.</text>
</comment>
<reference key="1">
    <citation type="journal article" date="1995" name="Curr. Genet.">
        <title>Codon usage, genetic code and phylogeny of Dictyostelium discoideum mitochondrial DNA as deduced from a 7.3-kb region.</title>
        <authorList>
            <person name="Angata K."/>
            <person name="Kuroe K."/>
            <person name="Yanagisawa K."/>
            <person name="Tanaka Y."/>
        </authorList>
    </citation>
    <scope>NUCLEOTIDE SEQUENCE [GENOMIC DNA]</scope>
    <source>
        <strain>AX3</strain>
    </source>
</reference>
<reference key="2">
    <citation type="journal article" date="2000" name="Mol. Gen. Genet.">
        <title>The mitochondrial DNA of Dictyostelium discoideum: complete sequence, gene content and genome organization.</title>
        <authorList>
            <person name="Ogawa S."/>
            <person name="Yoshino R."/>
            <person name="Angata K."/>
            <person name="Iwamoto M."/>
            <person name="Pi M."/>
            <person name="Kuroe K."/>
            <person name="Matsuo K."/>
            <person name="Morio T."/>
            <person name="Urushihara H."/>
            <person name="Yanagisawa K."/>
            <person name="Tanaka Y."/>
        </authorList>
    </citation>
    <scope>NUCLEOTIDE SEQUENCE [LARGE SCALE GENOMIC DNA]</scope>
    <source>
        <strain>AX3</strain>
    </source>
</reference>
<gene>
    <name type="primary">atp9</name>
    <name type="ORF">DDB_G0294016</name>
</gene>
<sequence length="88" mass="8995">MKNIVKIEQLELASAVVELGKKVGAGLAAIGLTGAGAGVGIVFAAFILAVGMNPNLRGELFKLAMLGFALSEAVGLLALMMSFLILYS</sequence>
<accession>Q37315</accession>
<name>ATP9_DICDI</name>
<keyword id="KW-0138">CF(0)</keyword>
<keyword id="KW-0375">Hydrogen ion transport</keyword>
<keyword id="KW-0406">Ion transport</keyword>
<keyword id="KW-0446">Lipid-binding</keyword>
<keyword id="KW-0472">Membrane</keyword>
<keyword id="KW-0496">Mitochondrion</keyword>
<keyword id="KW-1185">Reference proteome</keyword>
<keyword id="KW-0812">Transmembrane</keyword>
<keyword id="KW-1133">Transmembrane helix</keyword>
<keyword id="KW-0813">Transport</keyword>
<dbReference type="EMBL" id="D16466">
    <property type="protein sequence ID" value="BAA03937.1"/>
    <property type="molecule type" value="Genomic_DNA"/>
</dbReference>
<dbReference type="EMBL" id="AB000109">
    <property type="protein sequence ID" value="BAA78065.1"/>
    <property type="molecule type" value="Genomic_DNA"/>
</dbReference>
<dbReference type="PIR" id="S68159">
    <property type="entry name" value="S68159"/>
</dbReference>
<dbReference type="RefSeq" id="NP_050083.1">
    <property type="nucleotide sequence ID" value="NC_000895.1"/>
</dbReference>
<dbReference type="SMR" id="Q37315"/>
<dbReference type="FunCoup" id="Q37315">
    <property type="interactions" value="1"/>
</dbReference>
<dbReference type="STRING" id="44689.Q37315"/>
<dbReference type="GeneID" id="2193910"/>
<dbReference type="KEGG" id="ddi:DidioMp16"/>
<dbReference type="dictyBase" id="DDB_G0294016">
    <property type="gene designation" value="atp9"/>
</dbReference>
<dbReference type="VEuPathDB" id="AmoebaDB:DidioMp16"/>
<dbReference type="InParanoid" id="Q37315"/>
<dbReference type="OMA" id="NKERRFQ"/>
<dbReference type="Reactome" id="R-DDI-1268020">
    <property type="pathway name" value="Mitochondrial protein import"/>
</dbReference>
<dbReference type="PRO" id="PR:Q37315"/>
<dbReference type="Proteomes" id="UP000002195">
    <property type="component" value="Mitochondrion"/>
</dbReference>
<dbReference type="GO" id="GO:0031012">
    <property type="term" value="C:extracellular matrix"/>
    <property type="evidence" value="ECO:0007005"/>
    <property type="project" value="dictyBase"/>
</dbReference>
<dbReference type="GO" id="GO:0031966">
    <property type="term" value="C:mitochondrial membrane"/>
    <property type="evidence" value="ECO:0007669"/>
    <property type="project" value="UniProtKB-SubCell"/>
</dbReference>
<dbReference type="GO" id="GO:0045259">
    <property type="term" value="C:proton-transporting ATP synthase complex"/>
    <property type="evidence" value="ECO:0007669"/>
    <property type="project" value="UniProtKB-KW"/>
</dbReference>
<dbReference type="GO" id="GO:0033177">
    <property type="term" value="C:proton-transporting two-sector ATPase complex, proton-transporting domain"/>
    <property type="evidence" value="ECO:0007669"/>
    <property type="project" value="InterPro"/>
</dbReference>
<dbReference type="GO" id="GO:0008289">
    <property type="term" value="F:lipid binding"/>
    <property type="evidence" value="ECO:0007669"/>
    <property type="project" value="UniProtKB-KW"/>
</dbReference>
<dbReference type="GO" id="GO:0015078">
    <property type="term" value="F:proton transmembrane transporter activity"/>
    <property type="evidence" value="ECO:0007669"/>
    <property type="project" value="InterPro"/>
</dbReference>
<dbReference type="GO" id="GO:0015986">
    <property type="term" value="P:proton motive force-driven ATP synthesis"/>
    <property type="evidence" value="ECO:0000318"/>
    <property type="project" value="GO_Central"/>
</dbReference>
<dbReference type="CDD" id="cd18182">
    <property type="entry name" value="ATP-synt_Fo_c_ATP5G3"/>
    <property type="match status" value="1"/>
</dbReference>
<dbReference type="FunFam" id="1.20.20.10:FF:000008">
    <property type="entry name" value="ATPase subunit 9 homolog"/>
    <property type="match status" value="1"/>
</dbReference>
<dbReference type="Gene3D" id="1.20.20.10">
    <property type="entry name" value="F1F0 ATP synthase subunit C"/>
    <property type="match status" value="1"/>
</dbReference>
<dbReference type="HAMAP" id="MF_01396">
    <property type="entry name" value="ATP_synth_c_bact"/>
    <property type="match status" value="1"/>
</dbReference>
<dbReference type="InterPro" id="IPR000454">
    <property type="entry name" value="ATP_synth_F0_csu"/>
</dbReference>
<dbReference type="InterPro" id="IPR038662">
    <property type="entry name" value="ATP_synth_F0_csu_sf"/>
</dbReference>
<dbReference type="InterPro" id="IPR002379">
    <property type="entry name" value="ATPase_proteolipid_c-like_dom"/>
</dbReference>
<dbReference type="InterPro" id="IPR035921">
    <property type="entry name" value="F/V-ATP_Csub_sf"/>
</dbReference>
<dbReference type="PANTHER" id="PTHR10031">
    <property type="entry name" value="ATP SYNTHASE LIPID-BINDING PROTEIN, MITOCHONDRIAL"/>
    <property type="match status" value="1"/>
</dbReference>
<dbReference type="PANTHER" id="PTHR10031:SF0">
    <property type="entry name" value="ATPASE PROTEIN 9"/>
    <property type="match status" value="1"/>
</dbReference>
<dbReference type="Pfam" id="PF00137">
    <property type="entry name" value="ATP-synt_C"/>
    <property type="match status" value="1"/>
</dbReference>
<dbReference type="PRINTS" id="PR00124">
    <property type="entry name" value="ATPASEC"/>
</dbReference>
<dbReference type="SUPFAM" id="SSF81333">
    <property type="entry name" value="F1F0 ATP synthase subunit C"/>
    <property type="match status" value="1"/>
</dbReference>
<evidence type="ECO:0000250" key="1"/>
<evidence type="ECO:0000255" key="2"/>
<evidence type="ECO:0000305" key="3"/>